<keyword id="KW-0687">Ribonucleoprotein</keyword>
<keyword id="KW-0689">Ribosomal protein</keyword>
<gene>
    <name type="primary">RpL38</name>
    <name evidence="1" type="ORF">AM-79</name>
</gene>
<reference evidence="3" key="1">
    <citation type="journal article" date="2008" name="Insect Biochem. Mol. Biol.">
        <title>Comparative sialomics between hard and soft ticks: implications for the evolution of blood-feeding behavior.</title>
        <authorList>
            <person name="Mans B.J."/>
            <person name="Andersen J.F."/>
            <person name="Francischetti I.M."/>
            <person name="Valenzuela J.G."/>
            <person name="Schwan T.G."/>
            <person name="Pham V.M."/>
            <person name="Garfield M.K."/>
            <person name="Hammer C.H."/>
            <person name="Ribeiro J.M.C."/>
        </authorList>
    </citation>
    <scope>NUCLEOTIDE SEQUENCE [LARGE SCALE MRNA]</scope>
    <source>
        <tissue>Salivary gland</tissue>
    </source>
</reference>
<proteinExistence type="inferred from homology"/>
<comment type="similarity">
    <text evidence="2">Belongs to the eukaryotic ribosomal protein eL38 family.</text>
</comment>
<accession>Q09JT4</accession>
<sequence>MPKQLKEIKDFLLTARRKDAKSVRIKKNPDNVTKFKVRCSKYLYTIVVKEKEKAEKLKQSLPPGLQVKELK</sequence>
<organism>
    <name type="scientific">Argas monolakensis</name>
    <name type="common">Mono lake bird tick</name>
    <dbReference type="NCBI Taxonomy" id="34602"/>
    <lineage>
        <taxon>Eukaryota</taxon>
        <taxon>Metazoa</taxon>
        <taxon>Ecdysozoa</taxon>
        <taxon>Arthropoda</taxon>
        <taxon>Chelicerata</taxon>
        <taxon>Arachnida</taxon>
        <taxon>Acari</taxon>
        <taxon>Parasitiformes</taxon>
        <taxon>Ixodida</taxon>
        <taxon>Ixodoidea</taxon>
        <taxon>Argasidae</taxon>
        <taxon>Argasinae</taxon>
        <taxon>Argas</taxon>
    </lineage>
</organism>
<name>RL38_ARGMO</name>
<protein>
    <recommendedName>
        <fullName evidence="2">Large ribosomal subunit protein eL38</fullName>
    </recommendedName>
    <alternativeName>
        <fullName>60S ribosomal protein L38</fullName>
    </alternativeName>
</protein>
<feature type="chain" id="PRO_0000319555" description="Large ribosomal subunit protein eL38">
    <location>
        <begin position="1"/>
        <end position="71"/>
    </location>
</feature>
<dbReference type="EMBL" id="DQ886762">
    <property type="protein sequence ID" value="ABI52679.1"/>
    <property type="molecule type" value="mRNA"/>
</dbReference>
<dbReference type="SMR" id="Q09JT4"/>
<dbReference type="GO" id="GO:0022625">
    <property type="term" value="C:cytosolic large ribosomal subunit"/>
    <property type="evidence" value="ECO:0007669"/>
    <property type="project" value="TreeGrafter"/>
</dbReference>
<dbReference type="GO" id="GO:0003735">
    <property type="term" value="F:structural constituent of ribosome"/>
    <property type="evidence" value="ECO:0007669"/>
    <property type="project" value="InterPro"/>
</dbReference>
<dbReference type="GO" id="GO:0022618">
    <property type="term" value="P:protein-RNA complex assembly"/>
    <property type="evidence" value="ECO:0007669"/>
    <property type="project" value="TreeGrafter"/>
</dbReference>
<dbReference type="GO" id="GO:0006412">
    <property type="term" value="P:translation"/>
    <property type="evidence" value="ECO:0007669"/>
    <property type="project" value="InterPro"/>
</dbReference>
<dbReference type="FunFam" id="3.30.720.90:FF:000001">
    <property type="entry name" value="60S ribosomal protein L38"/>
    <property type="match status" value="1"/>
</dbReference>
<dbReference type="Gene3D" id="3.30.720.90">
    <property type="match status" value="1"/>
</dbReference>
<dbReference type="InterPro" id="IPR002675">
    <property type="entry name" value="Ribosomal_eL38"/>
</dbReference>
<dbReference type="InterPro" id="IPR038464">
    <property type="entry name" value="Ribosomal_eL38_sf"/>
</dbReference>
<dbReference type="PANTHER" id="PTHR10965">
    <property type="entry name" value="60S RIBOSOMAL PROTEIN L38"/>
    <property type="match status" value="1"/>
</dbReference>
<dbReference type="PANTHER" id="PTHR10965:SF0">
    <property type="entry name" value="LARGE RIBOSOMAL SUBUNIT PROTEIN EL38"/>
    <property type="match status" value="1"/>
</dbReference>
<dbReference type="Pfam" id="PF01781">
    <property type="entry name" value="Ribosomal_L38e"/>
    <property type="match status" value="1"/>
</dbReference>
<evidence type="ECO:0000303" key="1">
    <source>
    </source>
</evidence>
<evidence type="ECO:0000305" key="2"/>
<evidence type="ECO:0000312" key="3">
    <source>
        <dbReference type="EMBL" id="ABI52679.1"/>
    </source>
</evidence>